<dbReference type="EMBL" id="AJ749949">
    <property type="protein sequence ID" value="CAG44965.1"/>
    <property type="molecule type" value="Genomic_DNA"/>
</dbReference>
<dbReference type="RefSeq" id="WP_003027191.1">
    <property type="nucleotide sequence ID" value="NZ_CP010290.1"/>
</dbReference>
<dbReference type="RefSeq" id="YP_169381.1">
    <property type="nucleotide sequence ID" value="NC_006570.2"/>
</dbReference>
<dbReference type="SMR" id="Q5NHW1"/>
<dbReference type="STRING" id="177416.FTT_0332"/>
<dbReference type="DNASU" id="3192008"/>
<dbReference type="EnsemblBacteria" id="CAG44965">
    <property type="protein sequence ID" value="CAG44965"/>
    <property type="gene ID" value="FTT_0332"/>
</dbReference>
<dbReference type="GeneID" id="75264254"/>
<dbReference type="KEGG" id="ftu:FTT_0332"/>
<dbReference type="eggNOG" id="COG0197">
    <property type="taxonomic scope" value="Bacteria"/>
</dbReference>
<dbReference type="OrthoDB" id="9802589at2"/>
<dbReference type="Proteomes" id="UP000001174">
    <property type="component" value="Chromosome"/>
</dbReference>
<dbReference type="GO" id="GO:0022625">
    <property type="term" value="C:cytosolic large ribosomal subunit"/>
    <property type="evidence" value="ECO:0007669"/>
    <property type="project" value="TreeGrafter"/>
</dbReference>
<dbReference type="GO" id="GO:0019843">
    <property type="term" value="F:rRNA binding"/>
    <property type="evidence" value="ECO:0007669"/>
    <property type="project" value="UniProtKB-UniRule"/>
</dbReference>
<dbReference type="GO" id="GO:0003735">
    <property type="term" value="F:structural constituent of ribosome"/>
    <property type="evidence" value="ECO:0007669"/>
    <property type="project" value="InterPro"/>
</dbReference>
<dbReference type="GO" id="GO:0000049">
    <property type="term" value="F:tRNA binding"/>
    <property type="evidence" value="ECO:0007669"/>
    <property type="project" value="UniProtKB-KW"/>
</dbReference>
<dbReference type="GO" id="GO:0006412">
    <property type="term" value="P:translation"/>
    <property type="evidence" value="ECO:0007669"/>
    <property type="project" value="UniProtKB-UniRule"/>
</dbReference>
<dbReference type="CDD" id="cd01433">
    <property type="entry name" value="Ribosomal_L16_L10e"/>
    <property type="match status" value="1"/>
</dbReference>
<dbReference type="FunFam" id="3.90.1170.10:FF:000001">
    <property type="entry name" value="50S ribosomal protein L16"/>
    <property type="match status" value="1"/>
</dbReference>
<dbReference type="Gene3D" id="3.90.1170.10">
    <property type="entry name" value="Ribosomal protein L10e/L16"/>
    <property type="match status" value="1"/>
</dbReference>
<dbReference type="HAMAP" id="MF_01342">
    <property type="entry name" value="Ribosomal_uL16"/>
    <property type="match status" value="1"/>
</dbReference>
<dbReference type="InterPro" id="IPR047873">
    <property type="entry name" value="Ribosomal_uL16"/>
</dbReference>
<dbReference type="InterPro" id="IPR000114">
    <property type="entry name" value="Ribosomal_uL16_bact-type"/>
</dbReference>
<dbReference type="InterPro" id="IPR020798">
    <property type="entry name" value="Ribosomal_uL16_CS"/>
</dbReference>
<dbReference type="InterPro" id="IPR016180">
    <property type="entry name" value="Ribosomal_uL16_dom"/>
</dbReference>
<dbReference type="InterPro" id="IPR036920">
    <property type="entry name" value="Ribosomal_uL16_sf"/>
</dbReference>
<dbReference type="NCBIfam" id="TIGR01164">
    <property type="entry name" value="rplP_bact"/>
    <property type="match status" value="1"/>
</dbReference>
<dbReference type="PANTHER" id="PTHR12220">
    <property type="entry name" value="50S/60S RIBOSOMAL PROTEIN L16"/>
    <property type="match status" value="1"/>
</dbReference>
<dbReference type="PANTHER" id="PTHR12220:SF13">
    <property type="entry name" value="LARGE RIBOSOMAL SUBUNIT PROTEIN UL16M"/>
    <property type="match status" value="1"/>
</dbReference>
<dbReference type="Pfam" id="PF00252">
    <property type="entry name" value="Ribosomal_L16"/>
    <property type="match status" value="1"/>
</dbReference>
<dbReference type="PRINTS" id="PR00060">
    <property type="entry name" value="RIBOSOMALL16"/>
</dbReference>
<dbReference type="SUPFAM" id="SSF54686">
    <property type="entry name" value="Ribosomal protein L16p/L10e"/>
    <property type="match status" value="1"/>
</dbReference>
<dbReference type="PROSITE" id="PS00586">
    <property type="entry name" value="RIBOSOMAL_L16_1"/>
    <property type="match status" value="1"/>
</dbReference>
<dbReference type="PROSITE" id="PS00701">
    <property type="entry name" value="RIBOSOMAL_L16_2"/>
    <property type="match status" value="1"/>
</dbReference>
<comment type="function">
    <text evidence="1">Binds 23S rRNA and is also seen to make contacts with the A and possibly P site tRNAs.</text>
</comment>
<comment type="subunit">
    <text evidence="1">Part of the 50S ribosomal subunit.</text>
</comment>
<comment type="similarity">
    <text evidence="1">Belongs to the universal ribosomal protein uL16 family.</text>
</comment>
<evidence type="ECO:0000255" key="1">
    <source>
        <dbReference type="HAMAP-Rule" id="MF_01342"/>
    </source>
</evidence>
<evidence type="ECO:0000305" key="2"/>
<feature type="chain" id="PRO_0000062104" description="Large ribosomal subunit protein uL16">
    <location>
        <begin position="1"/>
        <end position="137"/>
    </location>
</feature>
<keyword id="KW-1185">Reference proteome</keyword>
<keyword id="KW-0687">Ribonucleoprotein</keyword>
<keyword id="KW-0689">Ribosomal protein</keyword>
<keyword id="KW-0694">RNA-binding</keyword>
<keyword id="KW-0699">rRNA-binding</keyword>
<keyword id="KW-0820">tRNA-binding</keyword>
<protein>
    <recommendedName>
        <fullName evidence="1">Large ribosomal subunit protein uL16</fullName>
    </recommendedName>
    <alternativeName>
        <fullName evidence="2">50S ribosomal protein L16</fullName>
    </alternativeName>
</protein>
<proteinExistence type="inferred from homology"/>
<sequence>MLQPKRTKFRKQQKLRNRGLAHRGNKVSFGEFGLQATSRGRITARQIEAGRRAISRHIKRGGKIWIRIFPDKPITQKPLEVRMGKGKGSVEYWVAQIQPGRVLYEITGVKEELAREAFARAAAKMPVQTTFVEKQVM</sequence>
<name>RL16_FRATT</name>
<organism>
    <name type="scientific">Francisella tularensis subsp. tularensis (strain SCHU S4 / Schu 4)</name>
    <dbReference type="NCBI Taxonomy" id="177416"/>
    <lineage>
        <taxon>Bacteria</taxon>
        <taxon>Pseudomonadati</taxon>
        <taxon>Pseudomonadota</taxon>
        <taxon>Gammaproteobacteria</taxon>
        <taxon>Thiotrichales</taxon>
        <taxon>Francisellaceae</taxon>
        <taxon>Francisella</taxon>
    </lineage>
</organism>
<gene>
    <name evidence="1" type="primary">rplP</name>
    <name type="ordered locus">FTT_0332</name>
</gene>
<reference key="1">
    <citation type="journal article" date="2005" name="Nat. Genet.">
        <title>The complete genome sequence of Francisella tularensis, the causative agent of tularemia.</title>
        <authorList>
            <person name="Larsson P."/>
            <person name="Oyston P.C.F."/>
            <person name="Chain P."/>
            <person name="Chu M.C."/>
            <person name="Duffield M."/>
            <person name="Fuxelius H.-H."/>
            <person name="Garcia E."/>
            <person name="Haelltorp G."/>
            <person name="Johansson D."/>
            <person name="Isherwood K.E."/>
            <person name="Karp P.D."/>
            <person name="Larsson E."/>
            <person name="Liu Y."/>
            <person name="Michell S."/>
            <person name="Prior J."/>
            <person name="Prior R."/>
            <person name="Malfatti S."/>
            <person name="Sjoestedt A."/>
            <person name="Svensson K."/>
            <person name="Thompson N."/>
            <person name="Vergez L."/>
            <person name="Wagg J.K."/>
            <person name="Wren B.W."/>
            <person name="Lindler L.E."/>
            <person name="Andersson S.G.E."/>
            <person name="Forsman M."/>
            <person name="Titball R.W."/>
        </authorList>
    </citation>
    <scope>NUCLEOTIDE SEQUENCE [LARGE SCALE GENOMIC DNA]</scope>
    <source>
        <strain>SCHU S4 / Schu 4</strain>
    </source>
</reference>
<accession>Q5NHW1</accession>